<organism>
    <name type="scientific">Mus musculus</name>
    <name type="common">Mouse</name>
    <dbReference type="NCBI Taxonomy" id="10090"/>
    <lineage>
        <taxon>Eukaryota</taxon>
        <taxon>Metazoa</taxon>
        <taxon>Chordata</taxon>
        <taxon>Craniata</taxon>
        <taxon>Vertebrata</taxon>
        <taxon>Euteleostomi</taxon>
        <taxon>Mammalia</taxon>
        <taxon>Eutheria</taxon>
        <taxon>Euarchontoglires</taxon>
        <taxon>Glires</taxon>
        <taxon>Rodentia</taxon>
        <taxon>Myomorpha</taxon>
        <taxon>Muroidea</taxon>
        <taxon>Muridae</taxon>
        <taxon>Murinae</taxon>
        <taxon>Mus</taxon>
        <taxon>Mus</taxon>
    </lineage>
</organism>
<name>MTRFR_MOUSE</name>
<comment type="function">
    <text evidence="1">Part of a mitoribosome-associated quality control pathway that prevents aberrant translation by responding to interruptions during elongation. As heterodimer with MTRES1, ejects the unfinished nascent chain and peptidyl transfer RNA (tRNA), respectively, from stalled ribosomes. Recruitment of mitoribosome biogenesis factors to these quality control intermediates suggests additional roles for MTRES1 and MTRF during mitoribosome rescue.</text>
</comment>
<comment type="subunit">
    <text evidence="1">Interacts (via C-terminus) with MTRES1 (via S4 domain). Associates with mitoribosomal S39 large subunit, peptidyl tRNA and nascent chain.</text>
</comment>
<comment type="subcellular location">
    <subcellularLocation>
        <location evidence="1">Mitochondrion</location>
    </subcellularLocation>
</comment>
<comment type="alternative products">
    <event type="alternative splicing"/>
    <isoform>
        <id>Q80VP5-1</id>
        <name>1</name>
        <sequence type="displayed"/>
    </isoform>
    <isoform>
        <id>Q80VP5-2</id>
        <name>2</name>
        <sequence type="described" ref="VSP_029604 VSP_029605"/>
    </isoform>
</comment>
<comment type="domain">
    <text evidence="4">The GGQ domain interacts with the peptidyltransferase center (PTC) of the large ribosomal subunit to trigger nascent chain hydrolysis.</text>
</comment>
<comment type="PTM">
    <text evidence="1">Methylation of glutamine in the GGQ triplet by HEMK1.</text>
</comment>
<comment type="similarity">
    <text evidence="6">Belongs to the prokaryotic/mitochondrial release factor family.</text>
</comment>
<comment type="caution">
    <text evidence="6">In contrast to other members of the family, lacks the regions that come into close contact with the mRNA in the ribosomal A-site and determine the STOP codon specificity, suggesting a loss of codon specificity for translation release factor activity.</text>
</comment>
<protein>
    <recommendedName>
        <fullName evidence="6">Mitochondrial translation release factor in rescue</fullName>
    </recommendedName>
</protein>
<gene>
    <name evidence="7" type="primary">Mtrfr</name>
</gene>
<accession>Q80VP5</accession>
<accession>Q3US94</accession>
<accession>Q8BYK3</accession>
<accession>Q9CSJ6</accession>
<proteinExistence type="evidence at protein level"/>
<keyword id="KW-0002">3D-structure</keyword>
<keyword id="KW-0025">Alternative splicing</keyword>
<keyword id="KW-0175">Coiled coil</keyword>
<keyword id="KW-0488">Methylation</keyword>
<keyword id="KW-0496">Mitochondrion</keyword>
<keyword id="KW-0648">Protein biosynthesis</keyword>
<keyword id="KW-1185">Reference proteome</keyword>
<keyword id="KW-0809">Transit peptide</keyword>
<evidence type="ECO:0000250" key="1">
    <source>
        <dbReference type="UniProtKB" id="Q9H3J6"/>
    </source>
</evidence>
<evidence type="ECO:0000255" key="2"/>
<evidence type="ECO:0000256" key="3">
    <source>
        <dbReference type="SAM" id="MobiDB-lite"/>
    </source>
</evidence>
<evidence type="ECO:0000269" key="4">
    <source>
    </source>
</evidence>
<evidence type="ECO:0000303" key="5">
    <source>
    </source>
</evidence>
<evidence type="ECO:0000305" key="6"/>
<evidence type="ECO:0000312" key="7">
    <source>
        <dbReference type="MGI" id="MGI:1919900"/>
    </source>
</evidence>
<evidence type="ECO:0007829" key="8">
    <source>
        <dbReference type="PDB" id="2RSM"/>
    </source>
</evidence>
<feature type="transit peptide" description="Mitochondrion" evidence="2">
    <location>
        <begin position="1"/>
        <end position="98"/>
    </location>
</feature>
<feature type="chain" id="PRO_0000311836" description="Mitochondrial translation release factor in rescue">
    <location>
        <begin position="99"/>
        <end position="184"/>
    </location>
</feature>
<feature type="region of interest" description="GGQ domain" evidence="4">
    <location>
        <begin position="60"/>
        <end position="124"/>
    </location>
</feature>
<feature type="region of interest" description="Disordered" evidence="3">
    <location>
        <begin position="132"/>
        <end position="184"/>
    </location>
</feature>
<feature type="coiled-coil region" evidence="2">
    <location>
        <begin position="130"/>
        <end position="178"/>
    </location>
</feature>
<feature type="short sequence motif" description="GGQ" evidence="4">
    <location>
        <begin position="74"/>
        <end position="76"/>
    </location>
</feature>
<feature type="compositionally biased region" description="Basic and acidic residues" evidence="3">
    <location>
        <begin position="149"/>
        <end position="184"/>
    </location>
</feature>
<feature type="modified residue" description="N5-methylglutamine" evidence="1">
    <location>
        <position position="76"/>
    </location>
</feature>
<feature type="splice variant" id="VSP_029604" description="In isoform 2." evidence="5">
    <original>CHQTRSVDQNRKIARKVLQEKVDVFYNGENS</original>
    <variation>VETGGEPRSAATAGFSQWACPFWHGDTANSG</variation>
    <location>
        <begin position="98"/>
        <end position="128"/>
    </location>
</feature>
<feature type="splice variant" id="VSP_029605" description="In isoform 2." evidence="5">
    <location>
        <begin position="129"/>
        <end position="184"/>
    </location>
</feature>
<feature type="sequence conflict" description="In Ref. 1; BAB28408." evidence="6" ref="1">
    <original>L</original>
    <variation>F</variation>
    <location>
        <position position="35"/>
    </location>
</feature>
<feature type="helix" evidence="8">
    <location>
        <begin position="60"/>
        <end position="62"/>
    </location>
</feature>
<feature type="strand" evidence="8">
    <location>
        <begin position="64"/>
        <end position="67"/>
    </location>
</feature>
<feature type="strand" evidence="8">
    <location>
        <begin position="75"/>
        <end position="77"/>
    </location>
</feature>
<feature type="strand" evidence="8">
    <location>
        <begin position="85"/>
        <end position="88"/>
    </location>
</feature>
<feature type="turn" evidence="8">
    <location>
        <begin position="90"/>
        <end position="92"/>
    </location>
</feature>
<feature type="strand" evidence="8">
    <location>
        <begin position="95"/>
        <end position="98"/>
    </location>
</feature>
<feature type="helix" evidence="8">
    <location>
        <begin position="104"/>
        <end position="124"/>
    </location>
</feature>
<sequence length="184" mass="20787">MSSRSTWALLRLPLPLIRICSGKWGLRLQEKPALLFPGMAASTVQVAGRKDYPALLPLNESELEEQFVKGHGPGGQATNKTSNCVVLKHVPSGIVVKCHQTRSVDQNRKIARKVLQEKVDVFYNGENSPVHKEKLEAERRKRERKKRAKETLEKKKLLKELREASQNITEKKADADGIPRGFQE</sequence>
<reference key="1">
    <citation type="journal article" date="2005" name="Science">
        <title>The transcriptional landscape of the mammalian genome.</title>
        <authorList>
            <person name="Carninci P."/>
            <person name="Kasukawa T."/>
            <person name="Katayama S."/>
            <person name="Gough J."/>
            <person name="Frith M.C."/>
            <person name="Maeda N."/>
            <person name="Oyama R."/>
            <person name="Ravasi T."/>
            <person name="Lenhard B."/>
            <person name="Wells C."/>
            <person name="Kodzius R."/>
            <person name="Shimokawa K."/>
            <person name="Bajic V.B."/>
            <person name="Brenner S.E."/>
            <person name="Batalov S."/>
            <person name="Forrest A.R."/>
            <person name="Zavolan M."/>
            <person name="Davis M.J."/>
            <person name="Wilming L.G."/>
            <person name="Aidinis V."/>
            <person name="Allen J.E."/>
            <person name="Ambesi-Impiombato A."/>
            <person name="Apweiler R."/>
            <person name="Aturaliya R.N."/>
            <person name="Bailey T.L."/>
            <person name="Bansal M."/>
            <person name="Baxter L."/>
            <person name="Beisel K.W."/>
            <person name="Bersano T."/>
            <person name="Bono H."/>
            <person name="Chalk A.M."/>
            <person name="Chiu K.P."/>
            <person name="Choudhary V."/>
            <person name="Christoffels A."/>
            <person name="Clutterbuck D.R."/>
            <person name="Crowe M.L."/>
            <person name="Dalla E."/>
            <person name="Dalrymple B.P."/>
            <person name="de Bono B."/>
            <person name="Della Gatta G."/>
            <person name="di Bernardo D."/>
            <person name="Down T."/>
            <person name="Engstrom P."/>
            <person name="Fagiolini M."/>
            <person name="Faulkner G."/>
            <person name="Fletcher C.F."/>
            <person name="Fukushima T."/>
            <person name="Furuno M."/>
            <person name="Futaki S."/>
            <person name="Gariboldi M."/>
            <person name="Georgii-Hemming P."/>
            <person name="Gingeras T.R."/>
            <person name="Gojobori T."/>
            <person name="Green R.E."/>
            <person name="Gustincich S."/>
            <person name="Harbers M."/>
            <person name="Hayashi Y."/>
            <person name="Hensch T.K."/>
            <person name="Hirokawa N."/>
            <person name="Hill D."/>
            <person name="Huminiecki L."/>
            <person name="Iacono M."/>
            <person name="Ikeo K."/>
            <person name="Iwama A."/>
            <person name="Ishikawa T."/>
            <person name="Jakt M."/>
            <person name="Kanapin A."/>
            <person name="Katoh M."/>
            <person name="Kawasawa Y."/>
            <person name="Kelso J."/>
            <person name="Kitamura H."/>
            <person name="Kitano H."/>
            <person name="Kollias G."/>
            <person name="Krishnan S.P."/>
            <person name="Kruger A."/>
            <person name="Kummerfeld S.K."/>
            <person name="Kurochkin I.V."/>
            <person name="Lareau L.F."/>
            <person name="Lazarevic D."/>
            <person name="Lipovich L."/>
            <person name="Liu J."/>
            <person name="Liuni S."/>
            <person name="McWilliam S."/>
            <person name="Madan Babu M."/>
            <person name="Madera M."/>
            <person name="Marchionni L."/>
            <person name="Matsuda H."/>
            <person name="Matsuzawa S."/>
            <person name="Miki H."/>
            <person name="Mignone F."/>
            <person name="Miyake S."/>
            <person name="Morris K."/>
            <person name="Mottagui-Tabar S."/>
            <person name="Mulder N."/>
            <person name="Nakano N."/>
            <person name="Nakauchi H."/>
            <person name="Ng P."/>
            <person name="Nilsson R."/>
            <person name="Nishiguchi S."/>
            <person name="Nishikawa S."/>
            <person name="Nori F."/>
            <person name="Ohara O."/>
            <person name="Okazaki Y."/>
            <person name="Orlando V."/>
            <person name="Pang K.C."/>
            <person name="Pavan W.J."/>
            <person name="Pavesi G."/>
            <person name="Pesole G."/>
            <person name="Petrovsky N."/>
            <person name="Piazza S."/>
            <person name="Reed J."/>
            <person name="Reid J.F."/>
            <person name="Ring B.Z."/>
            <person name="Ringwald M."/>
            <person name="Rost B."/>
            <person name="Ruan Y."/>
            <person name="Salzberg S.L."/>
            <person name="Sandelin A."/>
            <person name="Schneider C."/>
            <person name="Schoenbach C."/>
            <person name="Sekiguchi K."/>
            <person name="Semple C.A."/>
            <person name="Seno S."/>
            <person name="Sessa L."/>
            <person name="Sheng Y."/>
            <person name="Shibata Y."/>
            <person name="Shimada H."/>
            <person name="Shimada K."/>
            <person name="Silva D."/>
            <person name="Sinclair B."/>
            <person name="Sperling S."/>
            <person name="Stupka E."/>
            <person name="Sugiura K."/>
            <person name="Sultana R."/>
            <person name="Takenaka Y."/>
            <person name="Taki K."/>
            <person name="Tammoja K."/>
            <person name="Tan S.L."/>
            <person name="Tang S."/>
            <person name="Taylor M.S."/>
            <person name="Tegner J."/>
            <person name="Teichmann S.A."/>
            <person name="Ueda H.R."/>
            <person name="van Nimwegen E."/>
            <person name="Verardo R."/>
            <person name="Wei C.L."/>
            <person name="Yagi K."/>
            <person name="Yamanishi H."/>
            <person name="Zabarovsky E."/>
            <person name="Zhu S."/>
            <person name="Zimmer A."/>
            <person name="Hide W."/>
            <person name="Bult C."/>
            <person name="Grimmond S.M."/>
            <person name="Teasdale R.D."/>
            <person name="Liu E.T."/>
            <person name="Brusic V."/>
            <person name="Quackenbush J."/>
            <person name="Wahlestedt C."/>
            <person name="Mattick J.S."/>
            <person name="Hume D.A."/>
            <person name="Kai C."/>
            <person name="Sasaki D."/>
            <person name="Tomaru Y."/>
            <person name="Fukuda S."/>
            <person name="Kanamori-Katayama M."/>
            <person name="Suzuki M."/>
            <person name="Aoki J."/>
            <person name="Arakawa T."/>
            <person name="Iida J."/>
            <person name="Imamura K."/>
            <person name="Itoh M."/>
            <person name="Kato T."/>
            <person name="Kawaji H."/>
            <person name="Kawagashira N."/>
            <person name="Kawashima T."/>
            <person name="Kojima M."/>
            <person name="Kondo S."/>
            <person name="Konno H."/>
            <person name="Nakano K."/>
            <person name="Ninomiya N."/>
            <person name="Nishio T."/>
            <person name="Okada M."/>
            <person name="Plessy C."/>
            <person name="Shibata K."/>
            <person name="Shiraki T."/>
            <person name="Suzuki S."/>
            <person name="Tagami M."/>
            <person name="Waki K."/>
            <person name="Watahiki A."/>
            <person name="Okamura-Oho Y."/>
            <person name="Suzuki H."/>
            <person name="Kawai J."/>
            <person name="Hayashizaki Y."/>
        </authorList>
    </citation>
    <scope>NUCLEOTIDE SEQUENCE [LARGE SCALE MRNA] (ISOFORM 2)</scope>
    <scope>NUCLEOTIDE SEQUENCE [LARGE SCALE MRNA] OF 1-152 (ISOFORM 1)</scope>
    <source>
        <strain>C57BL/6J</strain>
        <tissue>Cerebellum</tissue>
        <tissue>Spinal cord</tissue>
    </source>
</reference>
<reference key="2">
    <citation type="journal article" date="2004" name="Genome Res.">
        <title>The status, quality, and expansion of the NIH full-length cDNA project: the Mammalian Gene Collection (MGC).</title>
        <authorList>
            <consortium name="The MGC Project Team"/>
        </authorList>
    </citation>
    <scope>NUCLEOTIDE SEQUENCE [LARGE SCALE MRNA] (ISOFORM 1)</scope>
    <source>
        <tissue>Eye</tissue>
    </source>
</reference>
<reference key="3">
    <citation type="journal article" date="2010" name="Cell">
        <title>A tissue-specific atlas of mouse protein phosphorylation and expression.</title>
        <authorList>
            <person name="Huttlin E.L."/>
            <person name="Jedrychowski M.P."/>
            <person name="Elias J.E."/>
            <person name="Goswami T."/>
            <person name="Rad R."/>
            <person name="Beausoleil S.A."/>
            <person name="Villen J."/>
            <person name="Haas W."/>
            <person name="Sowa M.E."/>
            <person name="Gygi S.P."/>
        </authorList>
    </citation>
    <scope>IDENTIFICATION BY MASS SPECTROMETRY [LARGE SCALE ANALYSIS]</scope>
    <source>
        <tissue>Brain</tissue>
        <tissue>Brown adipose tissue</tissue>
    </source>
</reference>
<reference key="4">
    <citation type="journal article" date="2012" name="Proteins">
        <title>Solution structure and siRNA-mediated knockdown analysis of the mitochondrial disease-related protein C12orf65.</title>
        <authorList>
            <person name="Kogure H."/>
            <person name="Hikawa Y."/>
            <person name="Hagihara M."/>
            <person name="Tochio N."/>
            <person name="Koshiba S."/>
            <person name="Inoue Y."/>
            <person name="Guntert P."/>
            <person name="Kigawa T."/>
            <person name="Yokoyama S."/>
            <person name="Nameki N."/>
        </authorList>
    </citation>
    <scope>STRUCTURE BY NMR OF 21-124</scope>
</reference>
<dbReference type="EMBL" id="AK012682">
    <property type="protein sequence ID" value="BAB28408.3"/>
    <property type="molecule type" value="mRNA"/>
</dbReference>
<dbReference type="EMBL" id="AK039255">
    <property type="protein sequence ID" value="BAC30294.1"/>
    <property type="molecule type" value="mRNA"/>
</dbReference>
<dbReference type="EMBL" id="AK140664">
    <property type="protein sequence ID" value="BAE24439.1"/>
    <property type="molecule type" value="mRNA"/>
</dbReference>
<dbReference type="EMBL" id="BC046909">
    <property type="protein sequence ID" value="AAH46909.1"/>
    <property type="molecule type" value="mRNA"/>
</dbReference>
<dbReference type="CCDS" id="CCDS51647.1">
    <molecule id="Q80VP5-1"/>
</dbReference>
<dbReference type="CCDS" id="CCDS51648.1">
    <molecule id="Q80VP5-2"/>
</dbReference>
<dbReference type="RefSeq" id="NP_001128189.1">
    <molecule id="Q80VP5-1"/>
    <property type="nucleotide sequence ID" value="NM_001134717.2"/>
</dbReference>
<dbReference type="RefSeq" id="NP_082586.1">
    <molecule id="Q80VP5-2"/>
    <property type="nucleotide sequence ID" value="NM_028310.3"/>
</dbReference>
<dbReference type="PDB" id="2RSM">
    <property type="method" value="NMR"/>
    <property type="chains" value="A=21-124"/>
</dbReference>
<dbReference type="PDBsum" id="2RSM"/>
<dbReference type="BMRB" id="Q80VP5"/>
<dbReference type="SMR" id="Q80VP5"/>
<dbReference type="BioGRID" id="215491">
    <property type="interactions" value="1"/>
</dbReference>
<dbReference type="FunCoup" id="Q80VP5">
    <property type="interactions" value="1974"/>
</dbReference>
<dbReference type="STRING" id="10090.ENSMUSP00000076594"/>
<dbReference type="iPTMnet" id="Q80VP5"/>
<dbReference type="PhosphoSitePlus" id="Q80VP5"/>
<dbReference type="PaxDb" id="10090-ENSMUSP00000076594"/>
<dbReference type="PeptideAtlas" id="Q80VP5"/>
<dbReference type="Pumba" id="Q80VP5"/>
<dbReference type="Antibodypedia" id="31771">
    <property type="antibodies" value="54 antibodies from 15 providers"/>
</dbReference>
<dbReference type="DNASU" id="72650"/>
<dbReference type="Ensembl" id="ENSMUST00000077376.3">
    <molecule id="Q80VP5-1"/>
    <property type="protein sequence ID" value="ENSMUSP00000076594.3"/>
    <property type="gene ID" value="ENSMUSG00000047635.7"/>
</dbReference>
<dbReference type="Ensembl" id="ENSMUST00000111477.2">
    <molecule id="Q80VP5-2"/>
    <property type="protein sequence ID" value="ENSMUSP00000107102.2"/>
    <property type="gene ID" value="ENSMUSG00000047635.7"/>
</dbReference>
<dbReference type="GeneID" id="72650"/>
<dbReference type="KEGG" id="mmu:72650"/>
<dbReference type="UCSC" id="uc008zpm.1">
    <molecule id="Q80VP5-2"/>
    <property type="organism name" value="mouse"/>
</dbReference>
<dbReference type="UCSC" id="uc008zpn.2">
    <molecule id="Q80VP5-1"/>
    <property type="organism name" value="mouse"/>
</dbReference>
<dbReference type="AGR" id="MGI:1919900"/>
<dbReference type="CTD" id="91574"/>
<dbReference type="MGI" id="MGI:1919900">
    <property type="gene designation" value="Mtrfr"/>
</dbReference>
<dbReference type="VEuPathDB" id="HostDB:ENSMUSG00000047635"/>
<dbReference type="eggNOG" id="KOG2726">
    <property type="taxonomic scope" value="Eukaryota"/>
</dbReference>
<dbReference type="GeneTree" id="ENSGT00390000012759"/>
<dbReference type="HOGENOM" id="CLU_2078403_0_0_1"/>
<dbReference type="InParanoid" id="Q80VP5"/>
<dbReference type="OMA" id="KCHLHRL"/>
<dbReference type="OrthoDB" id="277888at2759"/>
<dbReference type="PhylomeDB" id="Q80VP5"/>
<dbReference type="TreeFam" id="TF323274"/>
<dbReference type="BioGRID-ORCS" id="72650">
    <property type="hits" value="7 hits in 77 CRISPR screens"/>
</dbReference>
<dbReference type="EvolutionaryTrace" id="Q80VP5"/>
<dbReference type="PRO" id="PR:Q80VP5"/>
<dbReference type="Proteomes" id="UP000000589">
    <property type="component" value="Chromosome 5"/>
</dbReference>
<dbReference type="RNAct" id="Q80VP5">
    <property type="molecule type" value="protein"/>
</dbReference>
<dbReference type="Bgee" id="ENSMUSG00000047635">
    <property type="expression patterns" value="Expressed in embryonic post-anal tail and 64 other cell types or tissues"/>
</dbReference>
<dbReference type="GO" id="GO:0005739">
    <property type="term" value="C:mitochondrion"/>
    <property type="evidence" value="ECO:0000250"/>
    <property type="project" value="UniProtKB"/>
</dbReference>
<dbReference type="GO" id="GO:0043023">
    <property type="term" value="F:ribosomal large subunit binding"/>
    <property type="evidence" value="ECO:0000250"/>
    <property type="project" value="UniProtKB"/>
</dbReference>
<dbReference type="GO" id="GO:0016149">
    <property type="term" value="F:translation release factor activity, codon specific"/>
    <property type="evidence" value="ECO:0007669"/>
    <property type="project" value="Ensembl"/>
</dbReference>
<dbReference type="GO" id="GO:0000049">
    <property type="term" value="F:tRNA binding"/>
    <property type="evidence" value="ECO:0000250"/>
    <property type="project" value="UniProtKB"/>
</dbReference>
<dbReference type="GO" id="GO:0072344">
    <property type="term" value="P:rescue of stalled ribosome"/>
    <property type="evidence" value="ECO:0000250"/>
    <property type="project" value="UniProtKB"/>
</dbReference>
<dbReference type="FunFam" id="3.30.160.20:FF:000054">
    <property type="entry name" value="Chromosome 12 open reading frame 65"/>
    <property type="match status" value="1"/>
</dbReference>
<dbReference type="Gene3D" id="3.30.160.20">
    <property type="match status" value="1"/>
</dbReference>
<dbReference type="InterPro" id="IPR052405">
    <property type="entry name" value="Mito_Transl_Release_Factor"/>
</dbReference>
<dbReference type="InterPro" id="IPR000352">
    <property type="entry name" value="Pep_chain_release_fac_I"/>
</dbReference>
<dbReference type="InterPro" id="IPR045853">
    <property type="entry name" value="Pep_chain_release_fac_I_sf"/>
</dbReference>
<dbReference type="PANTHER" id="PTHR46203:SF1">
    <property type="entry name" value="MITOCHONDRIAL TRANSLATION RELEASE FACTOR IN RESCUE"/>
    <property type="match status" value="1"/>
</dbReference>
<dbReference type="PANTHER" id="PTHR46203">
    <property type="entry name" value="PROBABLE PEPTIDE CHAIN RELEASE FACTOR C12ORF65"/>
    <property type="match status" value="1"/>
</dbReference>
<dbReference type="Pfam" id="PF00472">
    <property type="entry name" value="RF-1"/>
    <property type="match status" value="1"/>
</dbReference>
<dbReference type="SUPFAM" id="SSF75620">
    <property type="entry name" value="Release factor"/>
    <property type="match status" value="1"/>
</dbReference>